<feature type="chain" id="PRO_1000140300" description="HTH-type transcriptional repressor PurR">
    <location>
        <begin position="1"/>
        <end position="341"/>
    </location>
</feature>
<feature type="domain" description="HTH lacI-type" evidence="1">
    <location>
        <begin position="2"/>
        <end position="56"/>
    </location>
</feature>
<feature type="DNA-binding region" description="H-T-H motif" evidence="1">
    <location>
        <begin position="4"/>
        <end position="23"/>
    </location>
</feature>
<feature type="DNA-binding region" evidence="1">
    <location>
        <begin position="48"/>
        <end position="56"/>
    </location>
</feature>
<feature type="binding site" evidence="1">
    <location>
        <position position="73"/>
    </location>
    <ligand>
        <name>hypoxanthine</name>
        <dbReference type="ChEBI" id="CHEBI:17368"/>
    </ligand>
</feature>
<feature type="binding site" evidence="1">
    <location>
        <position position="190"/>
    </location>
    <ligand>
        <name>hypoxanthine</name>
        <dbReference type="ChEBI" id="CHEBI:17368"/>
    </ligand>
</feature>
<feature type="binding site" evidence="1">
    <location>
        <position position="192"/>
    </location>
    <ligand>
        <name>hypoxanthine</name>
        <dbReference type="ChEBI" id="CHEBI:17368"/>
    </ligand>
</feature>
<feature type="binding site" evidence="1">
    <location>
        <position position="221"/>
    </location>
    <ligand>
        <name>hypoxanthine</name>
        <dbReference type="ChEBI" id="CHEBI:17368"/>
    </ligand>
</feature>
<feature type="binding site" evidence="1">
    <location>
        <position position="275"/>
    </location>
    <ligand>
        <name>hypoxanthine</name>
        <dbReference type="ChEBI" id="CHEBI:17368"/>
    </ligand>
</feature>
<evidence type="ECO:0000255" key="1">
    <source>
        <dbReference type="HAMAP-Rule" id="MF_01277"/>
    </source>
</evidence>
<protein>
    <recommendedName>
        <fullName evidence="1">HTH-type transcriptional repressor PurR</fullName>
    </recommendedName>
    <alternativeName>
        <fullName evidence="1">Pur regulon repressor</fullName>
    </alternativeName>
    <alternativeName>
        <fullName evidence="1">Purine nucleotide synthesis repressor</fullName>
    </alternativeName>
</protein>
<keyword id="KW-0238">DNA-binding</keyword>
<keyword id="KW-0658">Purine biosynthesis</keyword>
<keyword id="KW-0678">Repressor</keyword>
<keyword id="KW-0804">Transcription</keyword>
<keyword id="KW-0805">Transcription regulation</keyword>
<dbReference type="EMBL" id="AM933173">
    <property type="protein sequence ID" value="CAR37547.1"/>
    <property type="molecule type" value="Genomic_DNA"/>
</dbReference>
<dbReference type="RefSeq" id="WP_000190993.1">
    <property type="nucleotide sequence ID" value="NC_011274.1"/>
</dbReference>
<dbReference type="SMR" id="B5RAM9"/>
<dbReference type="KEGG" id="seg:SG1688"/>
<dbReference type="HOGENOM" id="CLU_037628_6_2_6"/>
<dbReference type="UniPathway" id="UPA00488"/>
<dbReference type="Proteomes" id="UP000008321">
    <property type="component" value="Chromosome"/>
</dbReference>
<dbReference type="GO" id="GO:0003700">
    <property type="term" value="F:DNA-binding transcription factor activity"/>
    <property type="evidence" value="ECO:0007669"/>
    <property type="project" value="TreeGrafter"/>
</dbReference>
<dbReference type="GO" id="GO:0000976">
    <property type="term" value="F:transcription cis-regulatory region binding"/>
    <property type="evidence" value="ECO:0007669"/>
    <property type="project" value="TreeGrafter"/>
</dbReference>
<dbReference type="GO" id="GO:0045892">
    <property type="term" value="P:negative regulation of DNA-templated transcription"/>
    <property type="evidence" value="ECO:0007669"/>
    <property type="project" value="UniProtKB-UniRule"/>
</dbReference>
<dbReference type="GO" id="GO:0006164">
    <property type="term" value="P:purine nucleotide biosynthetic process"/>
    <property type="evidence" value="ECO:0007669"/>
    <property type="project" value="UniProtKB-UniPathway"/>
</dbReference>
<dbReference type="CDD" id="cd01392">
    <property type="entry name" value="HTH_LacI"/>
    <property type="match status" value="1"/>
</dbReference>
<dbReference type="CDD" id="cd06275">
    <property type="entry name" value="PBP1_PurR"/>
    <property type="match status" value="1"/>
</dbReference>
<dbReference type="FunFam" id="1.10.260.40:FF:000002">
    <property type="entry name" value="HTH-type transcriptional repressor PurR"/>
    <property type="match status" value="1"/>
</dbReference>
<dbReference type="FunFam" id="3.40.50.2300:FF:000045">
    <property type="entry name" value="HTH-type transcriptional repressor PurR"/>
    <property type="match status" value="1"/>
</dbReference>
<dbReference type="Gene3D" id="3.40.50.2300">
    <property type="match status" value="2"/>
</dbReference>
<dbReference type="Gene3D" id="1.10.260.40">
    <property type="entry name" value="lambda repressor-like DNA-binding domains"/>
    <property type="match status" value="1"/>
</dbReference>
<dbReference type="HAMAP" id="MF_01277">
    <property type="entry name" value="HTH_type_PurR"/>
    <property type="match status" value="1"/>
</dbReference>
<dbReference type="InterPro" id="IPR000843">
    <property type="entry name" value="HTH_LacI"/>
</dbReference>
<dbReference type="InterPro" id="IPR046335">
    <property type="entry name" value="LacI/GalR-like_sensor"/>
</dbReference>
<dbReference type="InterPro" id="IPR010982">
    <property type="entry name" value="Lambda_DNA-bd_dom_sf"/>
</dbReference>
<dbReference type="InterPro" id="IPR028082">
    <property type="entry name" value="Peripla_BP_I"/>
</dbReference>
<dbReference type="InterPro" id="IPR023588">
    <property type="entry name" value="Tscrpt_reg_HTH_PurR"/>
</dbReference>
<dbReference type="NCBIfam" id="NF007979">
    <property type="entry name" value="PRK10703.1"/>
    <property type="match status" value="1"/>
</dbReference>
<dbReference type="PANTHER" id="PTHR30146:SF148">
    <property type="entry name" value="HTH-TYPE TRANSCRIPTIONAL REPRESSOR PURR-RELATED"/>
    <property type="match status" value="1"/>
</dbReference>
<dbReference type="PANTHER" id="PTHR30146">
    <property type="entry name" value="LACI-RELATED TRANSCRIPTIONAL REPRESSOR"/>
    <property type="match status" value="1"/>
</dbReference>
<dbReference type="Pfam" id="PF00356">
    <property type="entry name" value="LacI"/>
    <property type="match status" value="1"/>
</dbReference>
<dbReference type="Pfam" id="PF13377">
    <property type="entry name" value="Peripla_BP_3"/>
    <property type="match status" value="1"/>
</dbReference>
<dbReference type="PRINTS" id="PR00036">
    <property type="entry name" value="HTHLACI"/>
</dbReference>
<dbReference type="SMART" id="SM00354">
    <property type="entry name" value="HTH_LACI"/>
    <property type="match status" value="1"/>
</dbReference>
<dbReference type="SUPFAM" id="SSF47413">
    <property type="entry name" value="lambda repressor-like DNA-binding domains"/>
    <property type="match status" value="1"/>
</dbReference>
<dbReference type="SUPFAM" id="SSF53822">
    <property type="entry name" value="Periplasmic binding protein-like I"/>
    <property type="match status" value="1"/>
</dbReference>
<dbReference type="PROSITE" id="PS00356">
    <property type="entry name" value="HTH_LACI_1"/>
    <property type="match status" value="1"/>
</dbReference>
<dbReference type="PROSITE" id="PS50932">
    <property type="entry name" value="HTH_LACI_2"/>
    <property type="match status" value="1"/>
</dbReference>
<accession>B5RAM9</accession>
<gene>
    <name evidence="1" type="primary">purR</name>
    <name type="ordered locus">SG1688</name>
</gene>
<organism>
    <name type="scientific">Salmonella gallinarum (strain 287/91 / NCTC 13346)</name>
    <dbReference type="NCBI Taxonomy" id="550538"/>
    <lineage>
        <taxon>Bacteria</taxon>
        <taxon>Pseudomonadati</taxon>
        <taxon>Pseudomonadota</taxon>
        <taxon>Gammaproteobacteria</taxon>
        <taxon>Enterobacterales</taxon>
        <taxon>Enterobacteriaceae</taxon>
        <taxon>Salmonella</taxon>
    </lineage>
</organism>
<reference key="1">
    <citation type="journal article" date="2008" name="Genome Res.">
        <title>Comparative genome analysis of Salmonella enteritidis PT4 and Salmonella gallinarum 287/91 provides insights into evolutionary and host adaptation pathways.</title>
        <authorList>
            <person name="Thomson N.R."/>
            <person name="Clayton D.J."/>
            <person name="Windhorst D."/>
            <person name="Vernikos G."/>
            <person name="Davidson S."/>
            <person name="Churcher C."/>
            <person name="Quail M.A."/>
            <person name="Stevens M."/>
            <person name="Jones M.A."/>
            <person name="Watson M."/>
            <person name="Barron A."/>
            <person name="Layton A."/>
            <person name="Pickard D."/>
            <person name="Kingsley R.A."/>
            <person name="Bignell A."/>
            <person name="Clark L."/>
            <person name="Harris B."/>
            <person name="Ormond D."/>
            <person name="Abdellah Z."/>
            <person name="Brooks K."/>
            <person name="Cherevach I."/>
            <person name="Chillingworth T."/>
            <person name="Woodward J."/>
            <person name="Norberczak H."/>
            <person name="Lord A."/>
            <person name="Arrowsmith C."/>
            <person name="Jagels K."/>
            <person name="Moule S."/>
            <person name="Mungall K."/>
            <person name="Saunders M."/>
            <person name="Whitehead S."/>
            <person name="Chabalgoity J.A."/>
            <person name="Maskell D."/>
            <person name="Humphreys T."/>
            <person name="Roberts M."/>
            <person name="Barrow P.A."/>
            <person name="Dougan G."/>
            <person name="Parkhill J."/>
        </authorList>
    </citation>
    <scope>NUCLEOTIDE SEQUENCE [LARGE SCALE GENOMIC DNA]</scope>
    <source>
        <strain>287/91 / NCTC 13346</strain>
    </source>
</reference>
<proteinExistence type="inferred from homology"/>
<name>PURR_SALG2</name>
<sequence>MATIKDVAKRANVSTTTVSHVINKTRFVAEETRNAVWAAIKELHYSPSAVARSLKVNHTKSIGLLATSSEAAYFAEIIEAVEKNCFQKGYTLILGNAWNNLEKQRAYLSMMAQKRVDGLLVMCSEYPEPLLSMLEEYRHIPMVVMDWGEAKADFTDTVIDNAFAGGYMAGRYLVERGHRDIGVIPGPLERNTGAGRLAGFMKAMEEALINVPDNWIVQGDFEPESGYHAMQQILSQSHRPTAVFCGGDIMAMGALCAADEMGLRVPQDVSVIGYDNVRNARYFTPALTTIHQPKDSLGETAFNMLLDRIVNKREESQSIEVHPRLVERRSVADGPFRDYRR</sequence>
<comment type="function">
    <text evidence="1">Is the main repressor of the genes involved in the de novo synthesis of purine nucleotides, regulating purB, purC, purEK, purF, purHD, purL, purMN and guaBA expression. PurR is allosterically activated to bind its cognate DNA by binding the purine corepressors, hypoxanthine or guanine, thereby effecting transcription repression.</text>
</comment>
<comment type="pathway">
    <text>Purine metabolism; purine nucleotide biosynthesis [regulation].</text>
</comment>
<comment type="subunit">
    <text evidence="1">Homodimer.</text>
</comment>
<comment type="domain">
    <text evidence="1">Consists of two structural and functional domains: an N-terminal DNA-binding domain, approximately the first 60 residues, and a larger C-terminal domain, approximately 280 residues, which imparts the function of corepressor binding and oligomerization.</text>
</comment>